<sequence length="286" mass="33743">MAARVLRARGAAWAGGLLQRAAPCSLLPRLRTWTSSSNRSREDSWLKSLFVRKVDPRKDAHSNLLAKKETSNLYKLQFHNVKPECLEAYNKICQEVLPKIHEDKHYPCTLVGTWNTWYGEQDQAVHLWRYEGGYPALTEVMNKLRENKEFLEFRKARSDMLLSRKNQLLLEFSFWNEPVPRSGPNIYELRSYQLRPGTMIEWGNYWARAIRFRQDGNEAVGGFFSQIGQLYMVHHLWAYRDLQTREDIRNAAWHKHGWEELVYYTVPLIQEMESRIMIPLKTSPLQ</sequence>
<dbReference type="EMBL" id="AF029786">
    <property type="protein sequence ID" value="AAC29002.1"/>
    <property type="molecule type" value="mRNA"/>
</dbReference>
<dbReference type="EMBL" id="AJ001259">
    <property type="protein sequence ID" value="CAA04633.1"/>
    <property type="status" value="ALT_FRAME"/>
    <property type="molecule type" value="mRNA"/>
</dbReference>
<dbReference type="EMBL" id="BT007112">
    <property type="protein sequence ID" value="AAP35776.1"/>
    <property type="molecule type" value="mRNA"/>
</dbReference>
<dbReference type="EMBL" id="AK097049">
    <property type="status" value="NOT_ANNOTATED_CDS"/>
    <property type="molecule type" value="mRNA"/>
</dbReference>
<dbReference type="EMBL" id="CR407612">
    <property type="protein sequence ID" value="CAG28540.1"/>
    <property type="molecule type" value="mRNA"/>
</dbReference>
<dbReference type="EMBL" id="AC092579">
    <property type="status" value="NOT_ANNOTATED_CDS"/>
    <property type="molecule type" value="Genomic_DNA"/>
</dbReference>
<dbReference type="EMBL" id="CH471140">
    <property type="protein sequence ID" value="EAX07966.1"/>
    <property type="molecule type" value="Genomic_DNA"/>
</dbReference>
<dbReference type="EMBL" id="CH471140">
    <property type="protein sequence ID" value="EAX07967.1"/>
    <property type="molecule type" value="Genomic_DNA"/>
</dbReference>
<dbReference type="EMBL" id="BC000732">
    <property type="protein sequence ID" value="AAH00732.1"/>
    <property type="molecule type" value="mRNA"/>
</dbReference>
<dbReference type="EMBL" id="BC001837">
    <property type="protein sequence ID" value="AAH01837.1"/>
    <property type="molecule type" value="mRNA"/>
</dbReference>
<dbReference type="EMBL" id="BC030821">
    <property type="protein sequence ID" value="AAH30821.1"/>
    <property type="molecule type" value="mRNA"/>
</dbReference>
<dbReference type="CCDS" id="CCDS5521.1">
    <molecule id="O75323-1"/>
</dbReference>
<dbReference type="CCDS" id="CCDS56488.1">
    <molecule id="O75323-2"/>
</dbReference>
<dbReference type="RefSeq" id="NP_001189398.1">
    <molecule id="O75323-2"/>
    <property type="nucleotide sequence ID" value="NM_001202469.2"/>
</dbReference>
<dbReference type="RefSeq" id="NP_001474.1">
    <molecule id="O75323-1"/>
    <property type="nucleotide sequence ID" value="NM_001483.3"/>
</dbReference>
<dbReference type="SMR" id="O75323"/>
<dbReference type="BioGRID" id="108901">
    <property type="interactions" value="171"/>
</dbReference>
<dbReference type="DIP" id="DIP-33564N"/>
<dbReference type="FunCoup" id="O75323">
    <property type="interactions" value="1475"/>
</dbReference>
<dbReference type="IntAct" id="O75323">
    <property type="interactions" value="74"/>
</dbReference>
<dbReference type="MINT" id="O75323"/>
<dbReference type="STRING" id="9606.ENSP00000313050"/>
<dbReference type="GlyGen" id="O75323">
    <property type="glycosylation" value="1 site, 1 O-linked glycan (1 site)"/>
</dbReference>
<dbReference type="iPTMnet" id="O75323"/>
<dbReference type="MetOSite" id="O75323"/>
<dbReference type="PhosphoSitePlus" id="O75323"/>
<dbReference type="SwissPalm" id="O75323"/>
<dbReference type="BioMuta" id="NIPSNAP2"/>
<dbReference type="jPOST" id="O75323"/>
<dbReference type="MassIVE" id="O75323"/>
<dbReference type="PaxDb" id="9606-ENSP00000313050"/>
<dbReference type="PeptideAtlas" id="O75323"/>
<dbReference type="ProteomicsDB" id="49893">
    <molecule id="O75323-1"/>
</dbReference>
<dbReference type="ProteomicsDB" id="7673"/>
<dbReference type="Pumba" id="O75323"/>
<dbReference type="Antibodypedia" id="27971">
    <property type="antibodies" value="292 antibodies from 30 providers"/>
</dbReference>
<dbReference type="DNASU" id="2631"/>
<dbReference type="Ensembl" id="ENST00000322090.8">
    <molecule id="O75323-1"/>
    <property type="protein sequence ID" value="ENSP00000313050.3"/>
    <property type="gene ID" value="ENSG00000146729.10"/>
</dbReference>
<dbReference type="Ensembl" id="ENST00000446778.5">
    <molecule id="O75323-2"/>
    <property type="protein sequence ID" value="ENSP00000406855.1"/>
    <property type="gene ID" value="ENSG00000146729.10"/>
</dbReference>
<dbReference type="GeneID" id="2631"/>
<dbReference type="KEGG" id="hsa:2631"/>
<dbReference type="MANE-Select" id="ENST00000322090.8">
    <property type="protein sequence ID" value="ENSP00000313050.3"/>
    <property type="RefSeq nucleotide sequence ID" value="NM_001483.3"/>
    <property type="RefSeq protein sequence ID" value="NP_001474.1"/>
</dbReference>
<dbReference type="UCSC" id="uc003tre.3">
    <molecule id="O75323-1"/>
    <property type="organism name" value="human"/>
</dbReference>
<dbReference type="AGR" id="HGNC:4179"/>
<dbReference type="CTD" id="2631"/>
<dbReference type="DisGeNET" id="2631"/>
<dbReference type="GeneCards" id="NIPSNAP2"/>
<dbReference type="HGNC" id="HGNC:4179">
    <property type="gene designation" value="NIPSNAP2"/>
</dbReference>
<dbReference type="HPA" id="ENSG00000146729">
    <property type="expression patterns" value="Group enriched (heart muscle, skeletal muscle, tongue)"/>
</dbReference>
<dbReference type="MIM" id="603004">
    <property type="type" value="gene"/>
</dbReference>
<dbReference type="neXtProt" id="NX_O75323"/>
<dbReference type="OpenTargets" id="ENSG00000146729"/>
<dbReference type="PharmGKB" id="PA28593"/>
<dbReference type="VEuPathDB" id="HostDB:ENSG00000146729"/>
<dbReference type="eggNOG" id="KOG2883">
    <property type="taxonomic scope" value="Eukaryota"/>
</dbReference>
<dbReference type="GeneTree" id="ENSGT00950000183018"/>
<dbReference type="HOGENOM" id="CLU_053393_1_0_1"/>
<dbReference type="InParanoid" id="O75323"/>
<dbReference type="OMA" id="REKSWSV"/>
<dbReference type="OrthoDB" id="10262843at2759"/>
<dbReference type="PAN-GO" id="O75323">
    <property type="GO annotations" value="1 GO annotation based on evolutionary models"/>
</dbReference>
<dbReference type="PhylomeDB" id="O75323"/>
<dbReference type="TreeFam" id="TF314501"/>
<dbReference type="PathwayCommons" id="O75323"/>
<dbReference type="Reactome" id="R-HSA-9013407">
    <property type="pathway name" value="RHOH GTPase cycle"/>
</dbReference>
<dbReference type="Reactome" id="R-HSA-9013409">
    <property type="pathway name" value="RHOJ GTPase cycle"/>
</dbReference>
<dbReference type="SignaLink" id="O75323"/>
<dbReference type="BioGRID-ORCS" id="2631">
    <property type="hits" value="12 hits in 1156 CRISPR screens"/>
</dbReference>
<dbReference type="CD-CODE" id="FB4E32DD">
    <property type="entry name" value="Presynaptic clusters and postsynaptic densities"/>
</dbReference>
<dbReference type="ChiTaRS" id="GBAS">
    <property type="organism name" value="human"/>
</dbReference>
<dbReference type="GeneWiki" id="GBAS_(gene)"/>
<dbReference type="GenomeRNAi" id="2631"/>
<dbReference type="Pharos" id="O75323">
    <property type="development level" value="Tbio"/>
</dbReference>
<dbReference type="PRO" id="PR:O75323"/>
<dbReference type="Proteomes" id="UP000005640">
    <property type="component" value="Chromosome 7"/>
</dbReference>
<dbReference type="RNAct" id="O75323">
    <property type="molecule type" value="protein"/>
</dbReference>
<dbReference type="Bgee" id="ENSG00000146729">
    <property type="expression patterns" value="Expressed in biceps brachii and 206 other cell types or tissues"/>
</dbReference>
<dbReference type="ExpressionAtlas" id="O75323">
    <property type="expression patterns" value="baseline and differential"/>
</dbReference>
<dbReference type="GO" id="GO:0005759">
    <property type="term" value="C:mitochondrial matrix"/>
    <property type="evidence" value="ECO:0000314"/>
    <property type="project" value="UniProtKB"/>
</dbReference>
<dbReference type="GO" id="GO:0005741">
    <property type="term" value="C:mitochondrial outer membrane"/>
    <property type="evidence" value="ECO:0000314"/>
    <property type="project" value="UniProtKB"/>
</dbReference>
<dbReference type="GO" id="GO:0005739">
    <property type="term" value="C:mitochondrion"/>
    <property type="evidence" value="ECO:0000314"/>
    <property type="project" value="LIFEdb"/>
</dbReference>
<dbReference type="GO" id="GO:0030674">
    <property type="term" value="F:protein-macromolecule adaptor activity"/>
    <property type="evidence" value="ECO:0000314"/>
    <property type="project" value="UniProtKB"/>
</dbReference>
<dbReference type="GO" id="GO:0007005">
    <property type="term" value="P:mitochondrion organization"/>
    <property type="evidence" value="ECO:0000315"/>
    <property type="project" value="BHF-UCL"/>
</dbReference>
<dbReference type="GO" id="GO:0000423">
    <property type="term" value="P:mitophagy"/>
    <property type="evidence" value="ECO:0000314"/>
    <property type="project" value="UniProtKB"/>
</dbReference>
<dbReference type="GO" id="GO:0006119">
    <property type="term" value="P:oxidative phosphorylation"/>
    <property type="evidence" value="ECO:0000315"/>
    <property type="project" value="BHF-UCL"/>
</dbReference>
<dbReference type="GO" id="GO:1901843">
    <property type="term" value="P:positive regulation of high voltage-gated calcium channel activity"/>
    <property type="evidence" value="ECO:0000250"/>
    <property type="project" value="UniProtKB"/>
</dbReference>
<dbReference type="FunFam" id="3.30.70.100:FF:000003">
    <property type="entry name" value="Protein NipSnap homolog 2"/>
    <property type="match status" value="1"/>
</dbReference>
<dbReference type="FunFam" id="3.30.70.100:FF:000007">
    <property type="entry name" value="protein NipSnap homolog 2"/>
    <property type="match status" value="1"/>
</dbReference>
<dbReference type="Gene3D" id="3.30.70.100">
    <property type="match status" value="2"/>
</dbReference>
<dbReference type="InterPro" id="IPR011008">
    <property type="entry name" value="Dimeric_a/b-barrel"/>
</dbReference>
<dbReference type="InterPro" id="IPR012577">
    <property type="entry name" value="NIPSNAP"/>
</dbReference>
<dbReference type="InterPro" id="IPR051557">
    <property type="entry name" value="NipSnap_domain"/>
</dbReference>
<dbReference type="PANTHER" id="PTHR21017">
    <property type="entry name" value="NIPSNAP-RELATED"/>
    <property type="match status" value="1"/>
</dbReference>
<dbReference type="PANTHER" id="PTHR21017:SF14">
    <property type="entry name" value="PROTEIN NIPSNAP HOMOLOG 2"/>
    <property type="match status" value="1"/>
</dbReference>
<dbReference type="Pfam" id="PF07978">
    <property type="entry name" value="NIPSNAP"/>
    <property type="match status" value="1"/>
</dbReference>
<dbReference type="SUPFAM" id="SSF54909">
    <property type="entry name" value="Dimeric alpha+beta barrel"/>
    <property type="match status" value="2"/>
</dbReference>
<comment type="function">
    <text evidence="3">Protein involved in mitophagy by facilitating recruitment of the autophagy machinery required for clearance of damaged mitochondria (PubMed:30982665). Accumulates on the mitochondria surface in response to mitochondrial depolarization and acts as a 'eat me' signal by recruiting proteins involved in selective autophagy, such as autophagy receptors (CALCOCO2/NDP52, NBR1, SQSTM1/p62, TAX1BP1 and WDFY3/ALFY) and ATG8 family proteins (MAP1LC3A, MAP1LC3B, MAP1LC3C, GABARAP, GABARAPL1 and GABARAPL2) (PubMed:30982665).</text>
</comment>
<comment type="subunit">
    <text evidence="2 3">Interacts with CALCOCO2/NDP52, NBR1, SQSTM1/p62, TAX1BP1 and WDFY3/ALFY (PubMed:30982665). Interacts with ATG8 family proteins (MAP1LC3A, MAP1LC3B, MAP1LC3C, GABARAP, GABARAPL1 and GABARAPL2) (PubMed:30982665). Interacts with VDAC1 (PubMed:26387735).</text>
</comment>
<comment type="interaction">
    <interactant intactId="EBI-307133">
        <id>O75323</id>
    </interactant>
    <interactant intactId="EBI-712001">
        <id>O95166</id>
        <label>GABARAP</label>
    </interactant>
    <organismsDiffer>false</organismsDiffer>
    <experiments>5</experiments>
</comment>
<comment type="interaction">
    <interactant intactId="EBI-307133">
        <id>O75323</id>
    </interactant>
    <interactant intactId="EBI-746969">
        <id>Q9H0R8</id>
        <label>GABARAPL1</label>
    </interactant>
    <organismsDiffer>false</organismsDiffer>
    <experiments>6</experiments>
</comment>
<comment type="interaction">
    <interactant intactId="EBI-307133">
        <id>O75323</id>
    </interactant>
    <interactant intactId="EBI-720116">
        <id>P60520</id>
        <label>GABARAPL2</label>
    </interactant>
    <organismsDiffer>false</organismsDiffer>
    <experiments>6</experiments>
</comment>
<comment type="interaction">
    <interactant intactId="EBI-307133">
        <id>O75323</id>
    </interactant>
    <interactant intactId="EBI-373144">
        <id>Q9GZQ8</id>
        <label>MAP1LC3B</label>
    </interactant>
    <organismsDiffer>false</organismsDiffer>
    <experiments>4</experiments>
</comment>
<comment type="interaction">
    <interactant intactId="EBI-307133">
        <id>O75323</id>
    </interactant>
    <interactant intactId="EBI-2603996">
        <id>Q9BXW4</id>
        <label>MAP1LC3C</label>
    </interactant>
    <organismsDiffer>false</organismsDiffer>
    <experiments>2</experiments>
</comment>
<comment type="subcellular location">
    <subcellularLocation>
        <location evidence="3">Mitochondrion matrix</location>
    </subcellularLocation>
</comment>
<comment type="alternative products">
    <event type="alternative splicing"/>
    <isoform>
        <id>O75323-1</id>
        <name>1</name>
        <sequence type="displayed"/>
    </isoform>
    <isoform>
        <id>O75323-2</id>
        <name>2</name>
        <sequence type="described" ref="VSP_044708"/>
    </isoform>
</comment>
<comment type="tissue specificity">
    <text evidence="4">Widely expressed (PubMed:9615231). Most abundant in heart and skeletal muscle (PubMed:9615231).</text>
</comment>
<comment type="similarity">
    <text evidence="8">Belongs to the NipSnap family.</text>
</comment>
<comment type="sequence caution" evidence="8">
    <conflict type="frameshift">
        <sequence resource="EMBL-CDS" id="CAA04633"/>
    </conflict>
</comment>
<keyword id="KW-0025">Alternative splicing</keyword>
<keyword id="KW-0072">Autophagy</keyword>
<keyword id="KW-0496">Mitochondrion</keyword>
<keyword id="KW-1267">Proteomics identification</keyword>
<keyword id="KW-1185">Reference proteome</keyword>
<keyword id="KW-0809">Transit peptide</keyword>
<reference key="1">
    <citation type="journal article" date="1998" name="Genomics">
        <title>GBAS, a novel gene encoding a protein with tyrosine phosphorylation sites and a transmembrane domain, is co-amplified with EGFR.</title>
        <authorList>
            <person name="Wang X.-Y."/>
            <person name="Smith D.I."/>
            <person name="Liu W."/>
            <person name="James C.D."/>
        </authorList>
    </citation>
    <scope>NUCLEOTIDE SEQUENCE [MRNA] (ISOFORM 1)</scope>
    <scope>TISSUE SPECIFICITY</scope>
</reference>
<reference key="2">
    <citation type="journal article" date="1998" name="Gene">
        <title>Characterization of the human NIPSNAP1 gene from 22q12: a member of a novel gene family.</title>
        <authorList>
            <person name="Seroussi E."/>
            <person name="Pan H.Q."/>
            <person name="Kedra D."/>
            <person name="Roe B.A."/>
            <person name="Dumanski J.P."/>
        </authorList>
    </citation>
    <scope>NUCLEOTIDE SEQUENCE [MRNA] (ISOFORM 1)</scope>
</reference>
<reference key="3">
    <citation type="submission" date="2004-10" db="EMBL/GenBank/DDBJ databases">
        <title>Cloning of human full-length CDSs in BD Creator(TM) system donor vector.</title>
        <authorList>
            <person name="Kalnine N."/>
            <person name="Chen X."/>
            <person name="Rolfs A."/>
            <person name="Halleck A."/>
            <person name="Hines L."/>
            <person name="Eisenstein S."/>
            <person name="Koundinya M."/>
            <person name="Raphael J."/>
            <person name="Moreira D."/>
            <person name="Kelley T."/>
            <person name="LaBaer J."/>
            <person name="Lin Y."/>
            <person name="Phelan M."/>
            <person name="Farmer A."/>
        </authorList>
    </citation>
    <scope>NUCLEOTIDE SEQUENCE [LARGE SCALE MRNA] (ISOFORM 1)</scope>
</reference>
<reference key="4">
    <citation type="journal article" date="2004" name="Nat. Genet.">
        <title>Complete sequencing and characterization of 21,243 full-length human cDNAs.</title>
        <authorList>
            <person name="Ota T."/>
            <person name="Suzuki Y."/>
            <person name="Nishikawa T."/>
            <person name="Otsuki T."/>
            <person name="Sugiyama T."/>
            <person name="Irie R."/>
            <person name="Wakamatsu A."/>
            <person name="Hayashi K."/>
            <person name="Sato H."/>
            <person name="Nagai K."/>
            <person name="Kimura K."/>
            <person name="Makita H."/>
            <person name="Sekine M."/>
            <person name="Obayashi M."/>
            <person name="Nishi T."/>
            <person name="Shibahara T."/>
            <person name="Tanaka T."/>
            <person name="Ishii S."/>
            <person name="Yamamoto J."/>
            <person name="Saito K."/>
            <person name="Kawai Y."/>
            <person name="Isono Y."/>
            <person name="Nakamura Y."/>
            <person name="Nagahari K."/>
            <person name="Murakami K."/>
            <person name="Yasuda T."/>
            <person name="Iwayanagi T."/>
            <person name="Wagatsuma M."/>
            <person name="Shiratori A."/>
            <person name="Sudo H."/>
            <person name="Hosoiri T."/>
            <person name="Kaku Y."/>
            <person name="Kodaira H."/>
            <person name="Kondo H."/>
            <person name="Sugawara M."/>
            <person name="Takahashi M."/>
            <person name="Kanda K."/>
            <person name="Yokoi T."/>
            <person name="Furuya T."/>
            <person name="Kikkawa E."/>
            <person name="Omura Y."/>
            <person name="Abe K."/>
            <person name="Kamihara K."/>
            <person name="Katsuta N."/>
            <person name="Sato K."/>
            <person name="Tanikawa M."/>
            <person name="Yamazaki M."/>
            <person name="Ninomiya K."/>
            <person name="Ishibashi T."/>
            <person name="Yamashita H."/>
            <person name="Murakawa K."/>
            <person name="Fujimori K."/>
            <person name="Tanai H."/>
            <person name="Kimata M."/>
            <person name="Watanabe M."/>
            <person name="Hiraoka S."/>
            <person name="Chiba Y."/>
            <person name="Ishida S."/>
            <person name="Ono Y."/>
            <person name="Takiguchi S."/>
            <person name="Watanabe S."/>
            <person name="Yosida M."/>
            <person name="Hotuta T."/>
            <person name="Kusano J."/>
            <person name="Kanehori K."/>
            <person name="Takahashi-Fujii A."/>
            <person name="Hara H."/>
            <person name="Tanase T.-O."/>
            <person name="Nomura Y."/>
            <person name="Togiya S."/>
            <person name="Komai F."/>
            <person name="Hara R."/>
            <person name="Takeuchi K."/>
            <person name="Arita M."/>
            <person name="Imose N."/>
            <person name="Musashino K."/>
            <person name="Yuuki H."/>
            <person name="Oshima A."/>
            <person name="Sasaki N."/>
            <person name="Aotsuka S."/>
            <person name="Yoshikawa Y."/>
            <person name="Matsunawa H."/>
            <person name="Ichihara T."/>
            <person name="Shiohata N."/>
            <person name="Sano S."/>
            <person name="Moriya S."/>
            <person name="Momiyama H."/>
            <person name="Satoh N."/>
            <person name="Takami S."/>
            <person name="Terashima Y."/>
            <person name="Suzuki O."/>
            <person name="Nakagawa S."/>
            <person name="Senoh A."/>
            <person name="Mizoguchi H."/>
            <person name="Goto Y."/>
            <person name="Shimizu F."/>
            <person name="Wakebe H."/>
            <person name="Hishigaki H."/>
            <person name="Watanabe T."/>
            <person name="Sugiyama A."/>
            <person name="Takemoto M."/>
            <person name="Kawakami B."/>
            <person name="Yamazaki M."/>
            <person name="Watanabe K."/>
            <person name="Kumagai A."/>
            <person name="Itakura S."/>
            <person name="Fukuzumi Y."/>
            <person name="Fujimori Y."/>
            <person name="Komiyama M."/>
            <person name="Tashiro H."/>
            <person name="Tanigami A."/>
            <person name="Fujiwara T."/>
            <person name="Ono T."/>
            <person name="Yamada K."/>
            <person name="Fujii Y."/>
            <person name="Ozaki K."/>
            <person name="Hirao M."/>
            <person name="Ohmori Y."/>
            <person name="Kawabata A."/>
            <person name="Hikiji T."/>
            <person name="Kobatake N."/>
            <person name="Inagaki H."/>
            <person name="Ikema Y."/>
            <person name="Okamoto S."/>
            <person name="Okitani R."/>
            <person name="Kawakami T."/>
            <person name="Noguchi S."/>
            <person name="Itoh T."/>
            <person name="Shigeta K."/>
            <person name="Senba T."/>
            <person name="Matsumura K."/>
            <person name="Nakajima Y."/>
            <person name="Mizuno T."/>
            <person name="Morinaga M."/>
            <person name="Sasaki M."/>
            <person name="Togashi T."/>
            <person name="Oyama M."/>
            <person name="Hata H."/>
            <person name="Watanabe M."/>
            <person name="Komatsu T."/>
            <person name="Mizushima-Sugano J."/>
            <person name="Satoh T."/>
            <person name="Shirai Y."/>
            <person name="Takahashi Y."/>
            <person name="Nakagawa K."/>
            <person name="Okumura K."/>
            <person name="Nagase T."/>
            <person name="Nomura N."/>
            <person name="Kikuchi H."/>
            <person name="Masuho Y."/>
            <person name="Yamashita R."/>
            <person name="Nakai K."/>
            <person name="Yada T."/>
            <person name="Nakamura Y."/>
            <person name="Ohara O."/>
            <person name="Isogai T."/>
            <person name="Sugano S."/>
        </authorList>
    </citation>
    <scope>NUCLEOTIDE SEQUENCE [LARGE SCALE MRNA] (ISOFORM 2)</scope>
    <source>
        <tissue>Small intestine</tissue>
    </source>
</reference>
<reference key="5">
    <citation type="submission" date="2004-05" db="EMBL/GenBank/DDBJ databases">
        <title>Cloning of human full open reading frames in Gateway(TM) system entry vector (pDONR201).</title>
        <authorList>
            <person name="Ebert L."/>
            <person name="Schick M."/>
            <person name="Neubert P."/>
            <person name="Schatten R."/>
            <person name="Henze S."/>
            <person name="Korn B."/>
        </authorList>
    </citation>
    <scope>NUCLEOTIDE SEQUENCE [LARGE SCALE MRNA] (ISOFORM 1)</scope>
</reference>
<reference key="6">
    <citation type="journal article" date="2003" name="Nature">
        <title>The DNA sequence of human chromosome 7.</title>
        <authorList>
            <person name="Hillier L.W."/>
            <person name="Fulton R.S."/>
            <person name="Fulton L.A."/>
            <person name="Graves T.A."/>
            <person name="Pepin K.H."/>
            <person name="Wagner-McPherson C."/>
            <person name="Layman D."/>
            <person name="Maas J."/>
            <person name="Jaeger S."/>
            <person name="Walker R."/>
            <person name="Wylie K."/>
            <person name="Sekhon M."/>
            <person name="Becker M.C."/>
            <person name="O'Laughlin M.D."/>
            <person name="Schaller M.E."/>
            <person name="Fewell G.A."/>
            <person name="Delehaunty K.D."/>
            <person name="Miner T.L."/>
            <person name="Nash W.E."/>
            <person name="Cordes M."/>
            <person name="Du H."/>
            <person name="Sun H."/>
            <person name="Edwards J."/>
            <person name="Bradshaw-Cordum H."/>
            <person name="Ali J."/>
            <person name="Andrews S."/>
            <person name="Isak A."/>
            <person name="Vanbrunt A."/>
            <person name="Nguyen C."/>
            <person name="Du F."/>
            <person name="Lamar B."/>
            <person name="Courtney L."/>
            <person name="Kalicki J."/>
            <person name="Ozersky P."/>
            <person name="Bielicki L."/>
            <person name="Scott K."/>
            <person name="Holmes A."/>
            <person name="Harkins R."/>
            <person name="Harris A."/>
            <person name="Strong C.M."/>
            <person name="Hou S."/>
            <person name="Tomlinson C."/>
            <person name="Dauphin-Kohlberg S."/>
            <person name="Kozlowicz-Reilly A."/>
            <person name="Leonard S."/>
            <person name="Rohlfing T."/>
            <person name="Rock S.M."/>
            <person name="Tin-Wollam A.-M."/>
            <person name="Abbott A."/>
            <person name="Minx P."/>
            <person name="Maupin R."/>
            <person name="Strowmatt C."/>
            <person name="Latreille P."/>
            <person name="Miller N."/>
            <person name="Johnson D."/>
            <person name="Murray J."/>
            <person name="Woessner J.P."/>
            <person name="Wendl M.C."/>
            <person name="Yang S.-P."/>
            <person name="Schultz B.R."/>
            <person name="Wallis J.W."/>
            <person name="Spieth J."/>
            <person name="Bieri T.A."/>
            <person name="Nelson J.O."/>
            <person name="Berkowicz N."/>
            <person name="Wohldmann P.E."/>
            <person name="Cook L.L."/>
            <person name="Hickenbotham M.T."/>
            <person name="Eldred J."/>
            <person name="Williams D."/>
            <person name="Bedell J.A."/>
            <person name="Mardis E.R."/>
            <person name="Clifton S.W."/>
            <person name="Chissoe S.L."/>
            <person name="Marra M.A."/>
            <person name="Raymond C."/>
            <person name="Haugen E."/>
            <person name="Gillett W."/>
            <person name="Zhou Y."/>
            <person name="James R."/>
            <person name="Phelps K."/>
            <person name="Iadanoto S."/>
            <person name="Bubb K."/>
            <person name="Simms E."/>
            <person name="Levy R."/>
            <person name="Clendenning J."/>
            <person name="Kaul R."/>
            <person name="Kent W.J."/>
            <person name="Furey T.S."/>
            <person name="Baertsch R.A."/>
            <person name="Brent M.R."/>
            <person name="Keibler E."/>
            <person name="Flicek P."/>
            <person name="Bork P."/>
            <person name="Suyama M."/>
            <person name="Bailey J.A."/>
            <person name="Portnoy M.E."/>
            <person name="Torrents D."/>
            <person name="Chinwalla A.T."/>
            <person name="Gish W.R."/>
            <person name="Eddy S.R."/>
            <person name="McPherson J.D."/>
            <person name="Olson M.V."/>
            <person name="Eichler E.E."/>
            <person name="Green E.D."/>
            <person name="Waterston R.H."/>
            <person name="Wilson R.K."/>
        </authorList>
    </citation>
    <scope>NUCLEOTIDE SEQUENCE [LARGE SCALE GENOMIC DNA]</scope>
</reference>
<reference key="7">
    <citation type="submission" date="2005-07" db="EMBL/GenBank/DDBJ databases">
        <authorList>
            <person name="Mural R.J."/>
            <person name="Istrail S."/>
            <person name="Sutton G.G."/>
            <person name="Florea L."/>
            <person name="Halpern A.L."/>
            <person name="Mobarry C.M."/>
            <person name="Lippert R."/>
            <person name="Walenz B."/>
            <person name="Shatkay H."/>
            <person name="Dew I."/>
            <person name="Miller J.R."/>
            <person name="Flanigan M.J."/>
            <person name="Edwards N.J."/>
            <person name="Bolanos R."/>
            <person name="Fasulo D."/>
            <person name="Halldorsson B.V."/>
            <person name="Hannenhalli S."/>
            <person name="Turner R."/>
            <person name="Yooseph S."/>
            <person name="Lu F."/>
            <person name="Nusskern D.R."/>
            <person name="Shue B.C."/>
            <person name="Zheng X.H."/>
            <person name="Zhong F."/>
            <person name="Delcher A.L."/>
            <person name="Huson D.H."/>
            <person name="Kravitz S.A."/>
            <person name="Mouchard L."/>
            <person name="Reinert K."/>
            <person name="Remington K.A."/>
            <person name="Clark A.G."/>
            <person name="Waterman M.S."/>
            <person name="Eichler E.E."/>
            <person name="Adams M.D."/>
            <person name="Hunkapiller M.W."/>
            <person name="Myers E.W."/>
            <person name="Venter J.C."/>
        </authorList>
    </citation>
    <scope>NUCLEOTIDE SEQUENCE [LARGE SCALE GENOMIC DNA]</scope>
</reference>
<reference key="8">
    <citation type="journal article" date="2004" name="Genome Res.">
        <title>The status, quality, and expansion of the NIH full-length cDNA project: the Mammalian Gene Collection (MGC).</title>
        <authorList>
            <consortium name="The MGC Project Team"/>
        </authorList>
    </citation>
    <scope>NUCLEOTIDE SEQUENCE [LARGE SCALE MRNA] (ISOFORM 1)</scope>
    <source>
        <tissue>Colon</tissue>
        <tissue>Lung</tissue>
    </source>
</reference>
<reference key="9">
    <citation type="journal article" date="2011" name="BMC Syst. Biol.">
        <title>Initial characterization of the human central proteome.</title>
        <authorList>
            <person name="Burkard T.R."/>
            <person name="Planyavsky M."/>
            <person name="Kaupe I."/>
            <person name="Breitwieser F.P."/>
            <person name="Buerckstuemmer T."/>
            <person name="Bennett K.L."/>
            <person name="Superti-Furga G."/>
            <person name="Colinge J."/>
        </authorList>
    </citation>
    <scope>IDENTIFICATION BY MASS SPECTROMETRY [LARGE SCALE ANALYSIS]</scope>
</reference>
<reference key="10">
    <citation type="journal article" date="2015" name="Mol. Cell">
        <title>SPG7 is an essential and conserved component of the mitochondrial permeability transition pore.</title>
        <authorList>
            <person name="Shanmughapriya S."/>
            <person name="Rajan S."/>
            <person name="Hoffman N.E."/>
            <person name="Higgins A.M."/>
            <person name="Tomar D."/>
            <person name="Nemani N."/>
            <person name="Hines K.J."/>
            <person name="Smith D.J."/>
            <person name="Eguchi A."/>
            <person name="Vallem S."/>
            <person name="Shaikh F."/>
            <person name="Cheung M."/>
            <person name="Leonard N.J."/>
            <person name="Stolakis R.S."/>
            <person name="Wolfers M.P."/>
            <person name="Ibetti J."/>
            <person name="Chuprun J.K."/>
            <person name="Jog N.R."/>
            <person name="Houser S.R."/>
            <person name="Koch W.J."/>
            <person name="Elrod J.W."/>
            <person name="Madesh M."/>
        </authorList>
    </citation>
    <scope>INTERACTION WITH VDAC1</scope>
    <scope>SUBCELLULAR LOCATION</scope>
</reference>
<reference key="11">
    <citation type="journal article" date="2015" name="Proteomics">
        <title>N-terminome analysis of the human mitochondrial proteome.</title>
        <authorList>
            <person name="Vaca Jacome A.S."/>
            <person name="Rabilloud T."/>
            <person name="Schaeffer-Reiss C."/>
            <person name="Rompais M."/>
            <person name="Ayoub D."/>
            <person name="Lane L."/>
            <person name="Bairoch A."/>
            <person name="Van Dorsselaer A."/>
            <person name="Carapito C."/>
        </authorList>
    </citation>
    <scope>IDENTIFICATION BY MASS SPECTROMETRY [LARGE SCALE ANALYSIS]</scope>
</reference>
<reference key="12">
    <citation type="journal article" date="2019" name="Dev. Cell">
        <title>NIPSNAP1 and NIPSNAP2 act as 'eat me' signals for mitophagy.</title>
        <authorList>
            <person name="Princely Abudu Y."/>
            <person name="Pankiv S."/>
            <person name="Mathai B.J."/>
            <person name="Haakon Lystad A."/>
            <person name="Bindesboell C."/>
            <person name="Brenne H.B."/>
            <person name="Yoke Wui Ng M."/>
            <person name="Thiede B."/>
            <person name="Yamamoto A."/>
            <person name="Mutugi Nthiga T."/>
            <person name="Lamark T."/>
            <person name="Esguerra C.V."/>
            <person name="Johansen T."/>
            <person name="Simonsen A."/>
        </authorList>
    </citation>
    <scope>FUNCTION</scope>
    <scope>SUBCELLULAR LOCATION</scope>
    <scope>INTERACTION WITH CALCOCO2; GABARAP; GABARAPL1; GABARAPL2; MAP1LC3A; MAP1LC3B; MAP1LC3C; NBR1; SQSTM1; TAX1BP1 AND WDFY3</scope>
</reference>
<evidence type="ECO:0000255" key="1"/>
<evidence type="ECO:0000269" key="2">
    <source>
    </source>
</evidence>
<evidence type="ECO:0000269" key="3">
    <source>
    </source>
</evidence>
<evidence type="ECO:0000269" key="4">
    <source>
    </source>
</evidence>
<evidence type="ECO:0000303" key="5">
    <source>
    </source>
</evidence>
<evidence type="ECO:0000303" key="6">
    <source>
    </source>
</evidence>
<evidence type="ECO:0000303" key="7">
    <source>
    </source>
</evidence>
<evidence type="ECO:0000305" key="8"/>
<evidence type="ECO:0000312" key="9">
    <source>
        <dbReference type="HGNC" id="HGNC:4179"/>
    </source>
</evidence>
<organism>
    <name type="scientific">Homo sapiens</name>
    <name type="common">Human</name>
    <dbReference type="NCBI Taxonomy" id="9606"/>
    <lineage>
        <taxon>Eukaryota</taxon>
        <taxon>Metazoa</taxon>
        <taxon>Chordata</taxon>
        <taxon>Craniata</taxon>
        <taxon>Vertebrata</taxon>
        <taxon>Euteleostomi</taxon>
        <taxon>Mammalia</taxon>
        <taxon>Eutheria</taxon>
        <taxon>Euarchontoglires</taxon>
        <taxon>Primates</taxon>
        <taxon>Haplorrhini</taxon>
        <taxon>Catarrhini</taxon>
        <taxon>Hominidae</taxon>
        <taxon>Homo</taxon>
    </lineage>
</organism>
<accession>O75323</accession>
<accession>C9IYJ3</accession>
<accession>O43801</accession>
<accession>Q53X96</accession>
<gene>
    <name evidence="6 9" type="primary">NIPSNAP2</name>
    <name evidence="7" type="synonym">GBAS</name>
</gene>
<proteinExistence type="evidence at protein level"/>
<protein>
    <recommendedName>
        <fullName>Protein NipSnap homolog 2</fullName>
        <shortName>NipSnap2</shortName>
    </recommendedName>
    <alternativeName>
        <fullName evidence="7">Glioblastoma-amplified sequence</fullName>
    </alternativeName>
</protein>
<name>NIPS2_HUMAN</name>
<feature type="transit peptide" description="Mitochondrion" evidence="1">
    <location>
        <begin position="1"/>
        <end position="23"/>
    </location>
</feature>
<feature type="chain" id="PRO_0000221148" description="Protein NipSnap homolog 2">
    <location>
        <begin position="24"/>
        <end position="286"/>
    </location>
</feature>
<feature type="splice variant" id="VSP_044708" description="In isoform 2." evidence="5">
    <original>HNVKPECLEAYNKICQEVLPKIHEDKHYPCTLVGTWNTWYGEQDQAVHLWRYEGGYPALTEVMNKLRENK</original>
    <variation>KRCCQRFTKINTTLVLWWGLGTRGMASRTKL</variation>
    <location>
        <begin position="79"/>
        <end position="148"/>
    </location>
</feature>
<feature type="sequence conflict" description="In Ref. 2; CAA04633." evidence="8" ref="2">
    <original>A</original>
    <variation>P</variation>
    <location>
        <position position="12"/>
    </location>
</feature>